<organism>
    <name type="scientific">Rhizobium etli (strain ATCC 51251 / DSM 11541 / JCM 21823 / NBRC 15573 / CFN 42)</name>
    <dbReference type="NCBI Taxonomy" id="347834"/>
    <lineage>
        <taxon>Bacteria</taxon>
        <taxon>Pseudomonadati</taxon>
        <taxon>Pseudomonadota</taxon>
        <taxon>Alphaproteobacteria</taxon>
        <taxon>Hyphomicrobiales</taxon>
        <taxon>Rhizobiaceae</taxon>
        <taxon>Rhizobium/Agrobacterium group</taxon>
        <taxon>Rhizobium</taxon>
    </lineage>
</organism>
<accession>Q2K2U9</accession>
<sequence>MPPLRWQACLFITINAVALSMLLFDAPVGASERPAAVKELGELLTGFGDSAWLICISILLFFQGKAGYKLLKTARSKAQALYVSWIGAYLFTTVVFSGLLANLLKRAIGRARPDHFHDYGMFSFTPFSGHAAFESFPSGHSTTVGAFFAAFALLFPRYRVAFIACAIWLGMTRVMVGAHYPSDVIAGLAFGGWFSLLTAIVYARCGLLFKLAPDGWPLAKRLFPDIEKPGAL</sequence>
<name>LPXE_RHIEC</name>
<evidence type="ECO:0000250" key="1">
    <source>
        <dbReference type="UniProtKB" id="O24866"/>
    </source>
</evidence>
<evidence type="ECO:0000255" key="2"/>
<evidence type="ECO:0000269" key="3">
    <source>
    </source>
</evidence>
<evidence type="ECO:0000303" key="4">
    <source>
    </source>
</evidence>
<evidence type="ECO:0000305" key="5"/>
<evidence type="ECO:0000305" key="6">
    <source>
    </source>
</evidence>
<comment type="function">
    <text evidence="6">Probably removes the 1-phosphate moiety from lipid A species. Does not seem to act on other membrane components, nor does it dephosphorylate the 4'-phosphate group of lipid A and/or lipid A precursors.</text>
</comment>
<comment type="pathway">
    <text evidence="5">Bacterial outer membrane biogenesis; LPS lipid A biosynthesis.</text>
</comment>
<comment type="subcellular location">
    <subcellularLocation>
        <location evidence="1">Cell inner membrane</location>
        <topology evidence="2">Multi-pass membrane protein</topology>
    </subcellularLocation>
</comment>
<comment type="disruption phenotype">
    <text evidence="3">Lipid A contains a monophosphate group at position 1. Retains 4'-dephosphorylase activity on Kdo(2)-lipid IV(A). Increased sensitivity to the cationic antimicrobial peptide (CAMP) polymyxin B (PMB) but not other several other antibiotics. A double lpxE-lpxF mutant contains lipid A bi-phosphorylated at positions 1- and 4'- and has greater sensitivity to PMB that either single mutant. No visible effect on free-living bacteria, or on nitrogen fixation upon nodulation of P.vulgaris.</text>
</comment>
<comment type="miscellaneous">
    <text evidence="6">In this strain lipid A lacks phosphate groups, instead contains a galacturonic acid moiety at position-4' in place of the monophosphate group found in E.coli.</text>
</comment>
<comment type="similarity">
    <text evidence="5">Belongs to the lipid A LpxE 1-phosphatase family.</text>
</comment>
<reference key="1">
    <citation type="journal article" date="2006" name="Proc. Natl. Acad. Sci. U.S.A.">
        <title>The partitioned Rhizobium etli genome: genetic and metabolic redundancy in seven interacting replicons.</title>
        <authorList>
            <person name="Gonzalez V."/>
            <person name="Santamaria R.I."/>
            <person name="Bustos P."/>
            <person name="Hernandez-Gonzalez I."/>
            <person name="Medrano-Soto A."/>
            <person name="Moreno-Hagelsieb G."/>
            <person name="Janga S.C."/>
            <person name="Ramirez M.A."/>
            <person name="Jimenez-Jacinto V."/>
            <person name="Collado-Vides J."/>
            <person name="Davila G."/>
        </authorList>
    </citation>
    <scope>NUCLEOTIDE SEQUENCE [LARGE SCALE GENOMIC DNA]</scope>
    <source>
        <strain>ATCC 51251 / DSM 11541 / JCM 21823 / NBRC 15573 / CFN 42</strain>
    </source>
</reference>
<reference key="2">
    <citation type="journal article" date="2010" name="Biochim. Biophys. Acta">
        <title>Altered lipid A structures and polymyxin hypersensitivity of Rhizobium etli mutants lacking the LpxE and LpxF phosphatases.</title>
        <authorList>
            <person name="Ingram B.O."/>
            <person name="Sohlenkamp C."/>
            <person name="Geiger O."/>
            <person name="Raetz C.R."/>
        </authorList>
    </citation>
    <scope>FUNCTION</scope>
    <scope>DISRUPTION PHENOTYPE</scope>
    <scope>LIPID A STRUCTURE</scope>
    <source>
        <strain>ATCC 51251 / DSM 11541 / JCM 21823 / NBRC 15573 / CFN 42</strain>
    </source>
</reference>
<keyword id="KW-0046">Antibiotic resistance</keyword>
<keyword id="KW-0997">Cell inner membrane</keyword>
<keyword id="KW-1003">Cell membrane</keyword>
<keyword id="KW-0378">Hydrolase</keyword>
<keyword id="KW-0441">Lipid A biosynthesis</keyword>
<keyword id="KW-0444">Lipid biosynthesis</keyword>
<keyword id="KW-0443">Lipid metabolism</keyword>
<keyword id="KW-0448">Lipopolysaccharide biosynthesis</keyword>
<keyword id="KW-0472">Membrane</keyword>
<keyword id="KW-1185">Reference proteome</keyword>
<keyword id="KW-0812">Transmembrane</keyword>
<keyword id="KW-1133">Transmembrane helix</keyword>
<gene>
    <name evidence="4" type="primary">lpxE</name>
    <name type="ordered locus">RHE_CH04094</name>
</gene>
<protein>
    <recommendedName>
        <fullName evidence="4">Lipid A 1-phosphatase</fullName>
        <ecNumber evidence="5">3.1.-.-</ecNumber>
    </recommendedName>
</protein>
<proteinExistence type="inferred from homology"/>
<dbReference type="EC" id="3.1.-.-" evidence="5"/>
<dbReference type="EMBL" id="CP000133">
    <property type="protein sequence ID" value="ABC92837.1"/>
    <property type="molecule type" value="Genomic_DNA"/>
</dbReference>
<dbReference type="SMR" id="Q2K2U9"/>
<dbReference type="KEGG" id="ret:RHE_CH04094"/>
<dbReference type="eggNOG" id="COG0671">
    <property type="taxonomic scope" value="Bacteria"/>
</dbReference>
<dbReference type="HOGENOM" id="CLU_072573_6_0_5"/>
<dbReference type="OrthoDB" id="9780507at2"/>
<dbReference type="UniPathway" id="UPA00973"/>
<dbReference type="Proteomes" id="UP000001936">
    <property type="component" value="Chromosome"/>
</dbReference>
<dbReference type="GO" id="GO:0005886">
    <property type="term" value="C:plasma membrane"/>
    <property type="evidence" value="ECO:0007669"/>
    <property type="project" value="UniProtKB-SubCell"/>
</dbReference>
<dbReference type="GO" id="GO:0016787">
    <property type="term" value="F:hydrolase activity"/>
    <property type="evidence" value="ECO:0007669"/>
    <property type="project" value="UniProtKB-KW"/>
</dbReference>
<dbReference type="GO" id="GO:0009245">
    <property type="term" value="P:lipid A biosynthetic process"/>
    <property type="evidence" value="ECO:0007669"/>
    <property type="project" value="UniProtKB-UniPathway"/>
</dbReference>
<dbReference type="GO" id="GO:0009103">
    <property type="term" value="P:lipopolysaccharide biosynthetic process"/>
    <property type="evidence" value="ECO:0007669"/>
    <property type="project" value="UniProtKB-KW"/>
</dbReference>
<dbReference type="GO" id="GO:0046677">
    <property type="term" value="P:response to antibiotic"/>
    <property type="evidence" value="ECO:0007669"/>
    <property type="project" value="UniProtKB-KW"/>
</dbReference>
<dbReference type="CDD" id="cd03389">
    <property type="entry name" value="PAP2_lipid_A_1_phosphatase"/>
    <property type="match status" value="1"/>
</dbReference>
<dbReference type="Gene3D" id="1.20.144.10">
    <property type="entry name" value="Phosphatidic acid phosphatase type 2/haloperoxidase"/>
    <property type="match status" value="2"/>
</dbReference>
<dbReference type="InterPro" id="IPR036938">
    <property type="entry name" value="P_Acid_Pase_2/haloperoxi_sf"/>
</dbReference>
<dbReference type="InterPro" id="IPR000326">
    <property type="entry name" value="P_Acid_Pase_2/haloperoxidase"/>
</dbReference>
<dbReference type="PANTHER" id="PTHR14969:SF62">
    <property type="entry name" value="DECAPRENYLPHOSPHORYL-5-PHOSPHORIBOSE PHOSPHATASE RV3807C-RELATED"/>
    <property type="match status" value="1"/>
</dbReference>
<dbReference type="PANTHER" id="PTHR14969">
    <property type="entry name" value="SPHINGOSINE-1-PHOSPHATE PHOSPHOHYDROLASE"/>
    <property type="match status" value="1"/>
</dbReference>
<dbReference type="Pfam" id="PF01569">
    <property type="entry name" value="PAP2"/>
    <property type="match status" value="1"/>
</dbReference>
<dbReference type="SMART" id="SM00014">
    <property type="entry name" value="acidPPc"/>
    <property type="match status" value="1"/>
</dbReference>
<dbReference type="SUPFAM" id="SSF48317">
    <property type="entry name" value="Acid phosphatase/Vanadium-dependent haloperoxidase"/>
    <property type="match status" value="1"/>
</dbReference>
<feature type="chain" id="PRO_0000432492" description="Lipid A 1-phosphatase">
    <location>
        <begin position="1"/>
        <end position="232"/>
    </location>
</feature>
<feature type="transmembrane region" description="Helical; Name=1" evidence="2">
    <location>
        <begin position="10"/>
        <end position="30"/>
    </location>
</feature>
<feature type="transmembrane region" description="Helical; Name=2" evidence="2">
    <location>
        <begin position="42"/>
        <end position="62"/>
    </location>
</feature>
<feature type="transmembrane region" description="Helical; Name=3" evidence="2">
    <location>
        <begin position="80"/>
        <end position="100"/>
    </location>
</feature>
<feature type="transmembrane region" description="Helical; Name=4" evidence="2">
    <location>
        <begin position="136"/>
        <end position="156"/>
    </location>
</feature>
<feature type="transmembrane region" description="Helical; Name=5" evidence="2">
    <location>
        <begin position="160"/>
        <end position="180"/>
    </location>
</feature>
<feature type="transmembrane region" description="Helical; Name=6" evidence="2">
    <location>
        <begin position="183"/>
        <end position="203"/>
    </location>
</feature>